<accession>P51711</accession>
<evidence type="ECO:0000250" key="1"/>
<evidence type="ECO:0000305" key="2"/>
<reference key="1">
    <citation type="journal article" date="1996" name="Nucleic Acids Res.">
        <title>The complete nucleotide sequence of bacteriophage HP1 DNA.</title>
        <authorList>
            <person name="Esposito D."/>
            <person name="Fitzmaurice W.P."/>
            <person name="Benjamin R.C."/>
            <person name="Goodman S.D."/>
            <person name="Waldman A.S."/>
            <person name="Scocca J.J."/>
        </authorList>
    </citation>
    <scope>NUCLEOTIDE SEQUENCE [LARGE SCALE GENOMIC DNA]</scope>
</reference>
<reference key="2">
    <citation type="journal article" date="1994" name="Mol. Microbiol.">
        <title>Identification of an HP1 phage protein required for site-specific excision.</title>
        <authorList>
            <person name="Esposito D."/>
            <person name="Scocca J.J."/>
        </authorList>
    </citation>
    <scope>NUCLEOTIDE SEQUENCE [GENOMIC DNA] OF 1-258</scope>
</reference>
<protein>
    <recommendedName>
        <fullName>Replication protein</fullName>
        <ecNumber>3.1.-.-</ecNumber>
    </recommendedName>
</protein>
<feature type="chain" id="PRO_0000165306" description="Replication protein">
    <location>
        <begin position="1"/>
        <end position="775"/>
    </location>
</feature>
<feature type="active site" description="O-(5'-phospho-DNA)-tyrosine intermediate" evidence="1">
    <location>
        <position position="512"/>
    </location>
</feature>
<feature type="active site" description="O-(5'-phospho-DNA)-tyrosine intermediate" evidence="1">
    <location>
        <position position="516"/>
    </location>
</feature>
<comment type="function">
    <text>Possible endonuclease which induces a single-strand cut and initiates DNA replication.</text>
</comment>
<comment type="similarity">
    <text evidence="2">Belongs to the phage GPA family.</text>
</comment>
<sequence length="775" mass="90416">MQSMWEQQRNNNLTAKNAHMAVVACERYQAAENGHKFDRTLLPFDESCYTPLQLELFATNPVDFEFIEQKLENLPRQRQREYFRKLYLKAYRSVKDDGSIAFLLGNKQRRHANDYLRDILDVRLQKVFSQYNVNVDFLQAFINTPQWLLSVKDEMQQAVQFSTVPTREELAKHYNELHYSGFHFRLLGTQQKQKQLPFYLITESKLKKMAYEMATAFIRFQCDCSHFLKNGIEKDNEGDIQGYFYQLYKWCGEIAFSAGFKIPHWEKIENDKRIKAEHIDSTLIRLTCEKWWFKQMRDIQKRMVEHIAIACGEVRANAASYISNQSFQEWQLQQRKNHDYLRAMIIENIDNPEEQVELFDMFLKSSSNPALRRNEMMVRLRGLEEWAEENNNEALFLTLTAPSSFHAGNGNKKWLGVNPRETQNYLNKVWQQFRALLSKRNIKFYGMRVAEPHKDGTPHWHALAYVPAEHKEEVIRLFKQKALELDGNEKGAAEHRCKVEKCDKTKGSATAYIAKYIAKNIDGFALAGEVSDEDPTLSLHDNALRVRAWASRWGIRQFQFYGGASICVWRELRRLISGQADDEIINKAQAAAGIANDYAAYMEIQGGALAKRADQPIKLDYETKPANKYGEQRKAIIGLANRFSLKQVISRTKKWQIKKRPQDFAQRTESMVERSSTANNSARSAPWTCVSNCNRSILEQKIKLLTQPICAPLSAQKLDYLFKYKRLTIDKYTALELTENDVQLVKRNQNMMTSLSPVSRNFQKLKDFHKNQRIQ</sequence>
<organismHost>
    <name type="scientific">Haemophilus influenzae</name>
    <dbReference type="NCBI Taxonomy" id="727"/>
</organismHost>
<organism>
    <name type="scientific">Haemophilus phage HP1 (strain HP1c1)</name>
    <name type="common">Bacteriophage HP1</name>
    <dbReference type="NCBI Taxonomy" id="1289570"/>
    <lineage>
        <taxon>Viruses</taxon>
        <taxon>Duplodnaviria</taxon>
        <taxon>Heunggongvirae</taxon>
        <taxon>Uroviricota</taxon>
        <taxon>Caudoviricetes</taxon>
        <taxon>Peduoviridae</taxon>
        <taxon>Hpunavirus</taxon>
        <taxon>Haemophilus phage HP1</taxon>
    </lineage>
</organism>
<gene>
    <name type="primary">rep</name>
</gene>
<proteinExistence type="inferred from homology"/>
<name>REP_BPHC1</name>
<dbReference type="EC" id="3.1.-.-"/>
<dbReference type="EMBL" id="U24159">
    <property type="protein sequence ID" value="AAB09194.1"/>
    <property type="molecule type" value="Genomic_DNA"/>
</dbReference>
<dbReference type="PIR" id="S69515">
    <property type="entry name" value="S69515"/>
</dbReference>
<dbReference type="RefSeq" id="NP_043478.1">
    <property type="nucleotide sequence ID" value="NC_001697.1"/>
</dbReference>
<dbReference type="GeneID" id="1261121"/>
<dbReference type="KEGG" id="vg:1261121"/>
<dbReference type="Proteomes" id="UP000001713">
    <property type="component" value="Segment"/>
</dbReference>
<dbReference type="GO" id="GO:0004519">
    <property type="term" value="F:endonuclease activity"/>
    <property type="evidence" value="ECO:0007669"/>
    <property type="project" value="UniProtKB-KW"/>
</dbReference>
<dbReference type="GO" id="GO:0006260">
    <property type="term" value="P:DNA replication"/>
    <property type="evidence" value="ECO:0007669"/>
    <property type="project" value="UniProtKB-KW"/>
</dbReference>
<dbReference type="GO" id="GO:0039693">
    <property type="term" value="P:viral DNA genome replication"/>
    <property type="evidence" value="ECO:0007669"/>
    <property type="project" value="UniProtKB-KW"/>
</dbReference>
<dbReference type="InterPro" id="IPR008766">
    <property type="entry name" value="Replication_gene_A-like"/>
</dbReference>
<dbReference type="Pfam" id="PF05840">
    <property type="entry name" value="Phage_GPA"/>
    <property type="match status" value="1"/>
</dbReference>
<keyword id="KW-0235">DNA replication</keyword>
<keyword id="KW-0255">Endonuclease</keyword>
<keyword id="KW-0378">Hydrolase</keyword>
<keyword id="KW-0540">Nuclease</keyword>
<keyword id="KW-1185">Reference proteome</keyword>
<keyword id="KW-1194">Viral DNA replication</keyword>